<dbReference type="EMBL" id="AC243972">
    <property type="status" value="NOT_ANNOTATED_CDS"/>
    <property type="molecule type" value="Genomic_DNA"/>
</dbReference>
<dbReference type="SMR" id="A0A0B4J248"/>
<dbReference type="FunCoup" id="A0A0B4J248">
    <property type="interactions" value="223"/>
</dbReference>
<dbReference type="IMGT_GENE-DB" id="TRAV1-1"/>
<dbReference type="GlyCosmos" id="A0A0B4J248">
    <property type="glycosylation" value="1 site, No reported glycans"/>
</dbReference>
<dbReference type="GlyGen" id="A0A0B4J248">
    <property type="glycosylation" value="1 site"/>
</dbReference>
<dbReference type="BioMuta" id="TRAV1-1"/>
<dbReference type="Ensembl" id="ENST00000542354.1">
    <property type="protein sequence ID" value="ENSP00000446309.1"/>
    <property type="gene ID" value="ENSG00000255569.1"/>
</dbReference>
<dbReference type="AGR" id="HGNC:12101"/>
<dbReference type="GeneCards" id="TRAV1-1"/>
<dbReference type="HGNC" id="HGNC:12101">
    <property type="gene designation" value="TRAV1-1"/>
</dbReference>
<dbReference type="HPA" id="ENSG00000255569">
    <property type="expression patterns" value="Tissue enriched (lymphoid)"/>
</dbReference>
<dbReference type="neXtProt" id="NX_A0A0B4J248"/>
<dbReference type="OpenTargets" id="ENSG00000255569"/>
<dbReference type="VEuPathDB" id="HostDB:ENSG00000255569"/>
<dbReference type="GeneTree" id="ENSGT00940000160183"/>
<dbReference type="HOGENOM" id="CLU_077975_8_2_1"/>
<dbReference type="InParanoid" id="A0A0B4J248"/>
<dbReference type="OMA" id="CTYQTSR"/>
<dbReference type="OrthoDB" id="8947657at2759"/>
<dbReference type="PAN-GO" id="A0A0B4J248">
    <property type="GO annotations" value="1 GO annotation based on evolutionary models"/>
</dbReference>
<dbReference type="PhylomeDB" id="A0A0B4J248"/>
<dbReference type="SignaLink" id="A0A0B4J248"/>
<dbReference type="ChiTaRS" id="TRAV1-1">
    <property type="organism name" value="human"/>
</dbReference>
<dbReference type="Pharos" id="A0A0B4J248">
    <property type="development level" value="Tdark"/>
</dbReference>
<dbReference type="PRO" id="PR:A0A0B4J248"/>
<dbReference type="Proteomes" id="UP000005640">
    <property type="component" value="Chromosome 14"/>
</dbReference>
<dbReference type="RNAct" id="A0A0B4J248">
    <property type="molecule type" value="protein"/>
</dbReference>
<dbReference type="Bgee" id="ENSG00000255569">
    <property type="expression patterns" value="Expressed in granulocyte and 61 other cell types or tissues"/>
</dbReference>
<dbReference type="GO" id="GO:0042101">
    <property type="term" value="C:T cell receptor complex"/>
    <property type="evidence" value="ECO:0007669"/>
    <property type="project" value="UniProtKB-KW"/>
</dbReference>
<dbReference type="GO" id="GO:0002250">
    <property type="term" value="P:adaptive immune response"/>
    <property type="evidence" value="ECO:0007669"/>
    <property type="project" value="UniProtKB-KW"/>
</dbReference>
<dbReference type="GO" id="GO:0009617">
    <property type="term" value="P:response to bacterium"/>
    <property type="evidence" value="ECO:0000318"/>
    <property type="project" value="GO_Central"/>
</dbReference>
<dbReference type="Gene3D" id="2.60.40.10">
    <property type="entry name" value="Immunoglobulins"/>
    <property type="match status" value="1"/>
</dbReference>
<dbReference type="InterPro" id="IPR007110">
    <property type="entry name" value="Ig-like_dom"/>
</dbReference>
<dbReference type="InterPro" id="IPR036179">
    <property type="entry name" value="Ig-like_dom_sf"/>
</dbReference>
<dbReference type="InterPro" id="IPR013783">
    <property type="entry name" value="Ig-like_fold"/>
</dbReference>
<dbReference type="InterPro" id="IPR013106">
    <property type="entry name" value="Ig_V-set"/>
</dbReference>
<dbReference type="InterPro" id="IPR051006">
    <property type="entry name" value="TCR_variable_domain"/>
</dbReference>
<dbReference type="PANTHER" id="PTHR19343:SF26">
    <property type="entry name" value="T CELL RECEPTOR ALPHA VARIABLE 1-1"/>
    <property type="match status" value="1"/>
</dbReference>
<dbReference type="PANTHER" id="PTHR19343">
    <property type="entry name" value="T CELL RECEPTOR ALPHA VARIABLE 1-2"/>
    <property type="match status" value="1"/>
</dbReference>
<dbReference type="Pfam" id="PF07686">
    <property type="entry name" value="V-set"/>
    <property type="match status" value="1"/>
</dbReference>
<dbReference type="SMART" id="SM00406">
    <property type="entry name" value="IGv"/>
    <property type="match status" value="1"/>
</dbReference>
<dbReference type="SUPFAM" id="SSF48726">
    <property type="entry name" value="Immunoglobulin"/>
    <property type="match status" value="1"/>
</dbReference>
<dbReference type="PROSITE" id="PS50835">
    <property type="entry name" value="IG_LIKE"/>
    <property type="match status" value="1"/>
</dbReference>
<keyword id="KW-1064">Adaptive immunity</keyword>
<keyword id="KW-1003">Cell membrane</keyword>
<keyword id="KW-1015">Disulfide bond</keyword>
<keyword id="KW-0325">Glycoprotein</keyword>
<keyword id="KW-0391">Immunity</keyword>
<keyword id="KW-0393">Immunoglobulin domain</keyword>
<keyword id="KW-0472">Membrane</keyword>
<keyword id="KW-0675">Receptor</keyword>
<keyword id="KW-1185">Reference proteome</keyword>
<keyword id="KW-0732">Signal</keyword>
<keyword id="KW-1279">T cell receptor</keyword>
<reference key="1">
    <citation type="journal article" date="2003" name="Nature">
        <title>The DNA sequence and analysis of human chromosome 14.</title>
        <authorList>
            <person name="Heilig R."/>
            <person name="Eckenberg R."/>
            <person name="Petit J.-L."/>
            <person name="Fonknechten N."/>
            <person name="Da Silva C."/>
            <person name="Cattolico L."/>
            <person name="Levy M."/>
            <person name="Barbe V."/>
            <person name="De Berardinis V."/>
            <person name="Ureta-Vidal A."/>
            <person name="Pelletier E."/>
            <person name="Vico V."/>
            <person name="Anthouard V."/>
            <person name="Rowen L."/>
            <person name="Madan A."/>
            <person name="Qin S."/>
            <person name="Sun H."/>
            <person name="Du H."/>
            <person name="Pepin K."/>
            <person name="Artiguenave F."/>
            <person name="Robert C."/>
            <person name="Cruaud C."/>
            <person name="Bruels T."/>
            <person name="Jaillon O."/>
            <person name="Friedlander L."/>
            <person name="Samson G."/>
            <person name="Brottier P."/>
            <person name="Cure S."/>
            <person name="Segurens B."/>
            <person name="Aniere F."/>
            <person name="Samain S."/>
            <person name="Crespeau H."/>
            <person name="Abbasi N."/>
            <person name="Aiach N."/>
            <person name="Boscus D."/>
            <person name="Dickhoff R."/>
            <person name="Dors M."/>
            <person name="Dubois I."/>
            <person name="Friedman C."/>
            <person name="Gouyvenoux M."/>
            <person name="James R."/>
            <person name="Madan A."/>
            <person name="Mairey-Estrada B."/>
            <person name="Mangenot S."/>
            <person name="Martins N."/>
            <person name="Menard M."/>
            <person name="Oztas S."/>
            <person name="Ratcliffe A."/>
            <person name="Shaffer T."/>
            <person name="Trask B."/>
            <person name="Vacherie B."/>
            <person name="Bellemere C."/>
            <person name="Belser C."/>
            <person name="Besnard-Gonnet M."/>
            <person name="Bartol-Mavel D."/>
            <person name="Boutard M."/>
            <person name="Briez-Silla S."/>
            <person name="Combette S."/>
            <person name="Dufosse-Laurent V."/>
            <person name="Ferron C."/>
            <person name="Lechaplais C."/>
            <person name="Louesse C."/>
            <person name="Muselet D."/>
            <person name="Magdelenat G."/>
            <person name="Pateau E."/>
            <person name="Petit E."/>
            <person name="Sirvain-Trukniewicz P."/>
            <person name="Trybou A."/>
            <person name="Vega-Czarny N."/>
            <person name="Bataille E."/>
            <person name="Bluet E."/>
            <person name="Bordelais I."/>
            <person name="Dubois M."/>
            <person name="Dumont C."/>
            <person name="Guerin T."/>
            <person name="Haffray S."/>
            <person name="Hammadi R."/>
            <person name="Muanga J."/>
            <person name="Pellouin V."/>
            <person name="Robert D."/>
            <person name="Wunderle E."/>
            <person name="Gauguet G."/>
            <person name="Roy A."/>
            <person name="Sainte-Marthe L."/>
            <person name="Verdier J."/>
            <person name="Verdier-Discala C."/>
            <person name="Hillier L.W."/>
            <person name="Fulton L."/>
            <person name="McPherson J."/>
            <person name="Matsuda F."/>
            <person name="Wilson R."/>
            <person name="Scarpelli C."/>
            <person name="Gyapay G."/>
            <person name="Wincker P."/>
            <person name="Saurin W."/>
            <person name="Quetier F."/>
            <person name="Waterston R."/>
            <person name="Hood L."/>
            <person name="Weissenbach J."/>
        </authorList>
    </citation>
    <scope>NUCLEOTIDE SEQUENCE [LARGE SCALE GENOMIC DNA] (IMGT ALLELE TRAV1-1*01)</scope>
</reference>
<reference key="2">
    <citation type="book" date="2001" name="The T Cell Receptor FactsBook.">
        <title>The T Cell Receptor FactsBook.</title>
        <editorList>
            <person name="Lefranc M.P."/>
            <person name="Lefranc G."/>
        </editorList>
        <authorList>
            <person name="Lefranc M.P."/>
            <person name="Lefranc G."/>
        </authorList>
    </citation>
    <scope>NOMENCLATURE</scope>
</reference>
<reference key="3">
    <citation type="journal article" date="2004" name="Nat. Rev. Immunol.">
        <title>The many important facets of T-cell repertoire diversity.</title>
        <authorList>
            <person name="Nikolich-Zugich J."/>
            <person name="Slifka M.K."/>
            <person name="Messaoudi I."/>
        </authorList>
    </citation>
    <scope>REVIEW ON T CELL REPERTOIRE DIVERSITY</scope>
</reference>
<reference key="4">
    <citation type="journal article" date="2010" name="Cold Spring Harb. Perspect. Biol.">
        <title>Structural biology of the T-cell receptor: insights into receptor assembly, ligand recognition, and initiation of signaling.</title>
        <authorList>
            <person name="Wucherpfennig K.W."/>
            <person name="Gagnon E."/>
            <person name="Call M.J."/>
            <person name="Huseby E.S."/>
            <person name="Call M.E."/>
        </authorList>
    </citation>
    <scope>REVIEW ON T CELL RECEPTOR-CD3 COMPLEX ASSEMBLY</scope>
    <scope>SUBCELLULAR LOCATION</scope>
</reference>
<reference key="5">
    <citation type="journal article" date="2013" name="Nat. Rev. Immunol.">
        <title>T cell receptor signalling networks: branched, diversified and bounded.</title>
        <authorList>
            <person name="Brownlie R.J."/>
            <person name="Zamoyska R."/>
        </authorList>
    </citation>
    <scope>REVIEW ON T CELL RECEPTOR SIGNALING</scope>
</reference>
<reference key="6">
    <citation type="journal article" date="2014" name="Front. Immunol.">
        <title>Immunoglobulin and T Cell Receptor Genes: IMGT((R)) and the Birth and Rise of Immunoinformatics.</title>
        <authorList>
            <person name="Lefranc M.P."/>
        </authorList>
    </citation>
    <scope>NOMENCLATURE</scope>
</reference>
<reference key="7">
    <citation type="journal article" date="2015" name="Annu. Rev. Immunol.">
        <title>T cell antigen receptor recognition of antigen-presenting molecules.</title>
        <authorList>
            <person name="Rossjohn J."/>
            <person name="Gras S."/>
            <person name="Miles J.J."/>
            <person name="Turner S.J."/>
            <person name="Godfrey D.I."/>
            <person name="McCluskey J."/>
        </authorList>
    </citation>
    <scope>REVIEW ON FUNCTION</scope>
</reference>
<accession>A0A0B4J248</accession>
<evidence type="ECO:0000255" key="1"/>
<evidence type="ECO:0000255" key="2">
    <source>
        <dbReference type="PROSITE-ProRule" id="PRU00114"/>
    </source>
</evidence>
<evidence type="ECO:0000303" key="3">
    <source>
    </source>
</evidence>
<evidence type="ECO:0000303" key="4">
    <source>
    </source>
</evidence>
<evidence type="ECO:0000303" key="5">
    <source>
    </source>
</evidence>
<evidence type="ECO:0000303" key="6">
    <source>
    </source>
</evidence>
<evidence type="ECO:0000303" key="7">
    <source>
    </source>
</evidence>
<evidence type="ECO:0000303" key="8">
    <source ref="2"/>
</evidence>
<evidence type="ECO:0000305" key="9"/>
<protein>
    <recommendedName>
        <fullName evidence="8">T cell receptor alpha variable 1-1</fullName>
    </recommendedName>
</protein>
<organism>
    <name type="scientific">Homo sapiens</name>
    <name type="common">Human</name>
    <dbReference type="NCBI Taxonomy" id="9606"/>
    <lineage>
        <taxon>Eukaryota</taxon>
        <taxon>Metazoa</taxon>
        <taxon>Chordata</taxon>
        <taxon>Craniata</taxon>
        <taxon>Vertebrata</taxon>
        <taxon>Euteleostomi</taxon>
        <taxon>Mammalia</taxon>
        <taxon>Eutheria</taxon>
        <taxon>Euarchontoglires</taxon>
        <taxon>Primates</taxon>
        <taxon>Haplorrhini</taxon>
        <taxon>Catarrhini</taxon>
        <taxon>Hominidae</taxon>
        <taxon>Homo</taxon>
    </lineage>
</organism>
<gene>
    <name evidence="8" type="primary">TRAV1-1</name>
</gene>
<proteinExistence type="inferred from homology"/>
<feature type="signal peptide" evidence="1">
    <location>
        <begin position="1"/>
        <end position="18"/>
    </location>
</feature>
<feature type="chain" id="PRO_5002092610" description="T cell receptor alpha variable 1-1" evidence="1">
    <location>
        <begin position="19"/>
        <end position="108"/>
    </location>
</feature>
<feature type="domain" description="Ig-like" evidence="2">
    <location>
        <begin position="19"/>
        <end position="108" status="greater than"/>
    </location>
</feature>
<feature type="glycosylation site" description="N-linked (GlcNAc...) asparagine" evidence="1">
    <location>
        <position position="38"/>
    </location>
</feature>
<feature type="disulfide bond" evidence="2">
    <location>
        <begin position="39"/>
        <end position="105"/>
    </location>
</feature>
<feature type="non-terminal residue">
    <location>
        <position position="108"/>
    </location>
</feature>
<sequence>MWGAFLLYVSMKMGGTAGQSLEQPSEVTAVEGAIVQINCTYQTSGFYGLSWYQQHDGGAPTFLSYNALDGLEETGRFSSFLSRSDSYGYLLLQELQMKDSASYFCAVR</sequence>
<comment type="function">
    <text evidence="3 5 6 7">V region of the variable domain of T cell receptor (TR) alpha chain that participates in the antigen recognition (PubMed:24600447). Alpha-beta T cell receptors are antigen specific receptors which are essential to the immune response and are present on the cell surface of T lymphocytes. Recognize peptide-major histocompatibility (MH) (pMH) complexes that are displayed by antigen presenting cells (APC), a prerequisite for efficient T cell adaptive immunity against pathogens (PubMed:25493333). Binding of alpha-beta TR to pMH complex initiates TR-CD3 clustering on the cell surface and intracellular activation of LCK that phosphorylates the ITAM motifs of CD3G, CD3D, CD3E and CD247 enabling the recruitment of ZAP70. In turn ZAP70 phosphorylates LAT, which recruits numerous signaling molecules to form the LAT signalosome. The LAT signalosome propagates signal branching to three major signaling pathways, the calcium, the mitogen-activated protein kinase (MAPK) kinase and the nuclear factor NF-kappa-B (NF-kB) pathways, leading to the mobilization of transcription factors that are critical for gene expression and essential for T cell growth and differentiation (PubMed:23524462). The T cell repertoire is generated in the thymus, by V-(D)-J rearrangement. This repertoire is then shaped by intrathymic selection events to generate a peripheral T cell pool of self-MH restricted, non-autoaggressive T cells. Post-thymic interaction of alpha-beta TR with the pMH complexes shapes TR structural and functional avidity (PubMed:15040585).</text>
</comment>
<comment type="subunit">
    <text evidence="4">Alpha-beta TR is a heterodimer composed of an alpha and beta chain; disulfide-linked. The alpha-beta TR is associated with the transmembrane signaling CD3 coreceptor proteins to form the TR-CD3 (TcR or TCR). The assembly of alpha-beta TR heterodimers with CD3 occurs in the endoplasmic reticulum where a single alpha-beta TR heterodimer associates with one CD3D-CD3E heterodimer, one CD3G-CD3E heterodimer and one CD247 homodimer forming a stable octameric structure. CD3D-CD3E and CD3G-CD3E heterodimers preferentially associate with TR alpha and TR beta chains, respectively. The association of the CD247 homodimer is the last step of TcR assembly in the endoplasmic reticulum and is required for transport to the cell surface.</text>
</comment>
<comment type="subcellular location">
    <subcellularLocation>
        <location evidence="4">Cell membrane</location>
    </subcellularLocation>
</comment>
<comment type="polymorphism">
    <text evidence="9">There are several alleles. The sequence shown is that of IMGT allele TRAV1-1*01.</text>
</comment>
<name>TVA11_HUMAN</name>